<keyword id="KW-0963">Cytoplasm</keyword>
<keyword id="KW-0255">Endonuclease</keyword>
<keyword id="KW-0378">Hydrolase</keyword>
<keyword id="KW-0460">Magnesium</keyword>
<keyword id="KW-0479">Metal-binding</keyword>
<keyword id="KW-0540">Nuclease</keyword>
<keyword id="KW-1185">Reference proteome</keyword>
<feature type="chain" id="PRO_1000074670" description="Ribonuclease H">
    <location>
        <begin position="1"/>
        <end position="158"/>
    </location>
</feature>
<feature type="domain" description="RNase H type-1" evidence="2">
    <location>
        <begin position="3"/>
        <end position="144"/>
    </location>
</feature>
<feature type="binding site" evidence="1">
    <location>
        <position position="12"/>
    </location>
    <ligand>
        <name>Mg(2+)</name>
        <dbReference type="ChEBI" id="CHEBI:18420"/>
        <label>1</label>
    </ligand>
</feature>
<feature type="binding site" evidence="1">
    <location>
        <position position="12"/>
    </location>
    <ligand>
        <name>Mg(2+)</name>
        <dbReference type="ChEBI" id="CHEBI:18420"/>
        <label>2</label>
    </ligand>
</feature>
<feature type="binding site" evidence="1">
    <location>
        <position position="50"/>
    </location>
    <ligand>
        <name>Mg(2+)</name>
        <dbReference type="ChEBI" id="CHEBI:18420"/>
        <label>1</label>
    </ligand>
</feature>
<feature type="binding site" evidence="1">
    <location>
        <position position="72"/>
    </location>
    <ligand>
        <name>Mg(2+)</name>
        <dbReference type="ChEBI" id="CHEBI:18420"/>
        <label>1</label>
    </ligand>
</feature>
<feature type="binding site" evidence="1">
    <location>
        <position position="136"/>
    </location>
    <ligand>
        <name>Mg(2+)</name>
        <dbReference type="ChEBI" id="CHEBI:18420"/>
        <label>2</label>
    </ligand>
</feature>
<reference key="1">
    <citation type="submission" date="2007-03" db="EMBL/GenBank/DDBJ databases">
        <title>Complete sequence of Shewanella loihica PV-4.</title>
        <authorList>
            <consortium name="US DOE Joint Genome Institute"/>
            <person name="Copeland A."/>
            <person name="Lucas S."/>
            <person name="Lapidus A."/>
            <person name="Barry K."/>
            <person name="Detter J.C."/>
            <person name="Glavina del Rio T."/>
            <person name="Hammon N."/>
            <person name="Israni S."/>
            <person name="Dalin E."/>
            <person name="Tice H."/>
            <person name="Pitluck S."/>
            <person name="Chain P."/>
            <person name="Malfatti S."/>
            <person name="Shin M."/>
            <person name="Vergez L."/>
            <person name="Schmutz J."/>
            <person name="Larimer F."/>
            <person name="Land M."/>
            <person name="Hauser L."/>
            <person name="Kyrpides N."/>
            <person name="Mikhailova N."/>
            <person name="Romine M.F."/>
            <person name="Serres G."/>
            <person name="Fredrickson J."/>
            <person name="Tiedje J."/>
            <person name="Richardson P."/>
        </authorList>
    </citation>
    <scope>NUCLEOTIDE SEQUENCE [LARGE SCALE GENOMIC DNA]</scope>
    <source>
        <strain>ATCC BAA-1088 / PV-4</strain>
    </source>
</reference>
<proteinExistence type="inferred from homology"/>
<protein>
    <recommendedName>
        <fullName evidence="1">Ribonuclease H</fullName>
        <shortName evidence="1">RNase H</shortName>
        <ecNumber evidence="1">3.1.26.4</ecNumber>
    </recommendedName>
</protein>
<organism>
    <name type="scientific">Shewanella loihica (strain ATCC BAA-1088 / PV-4)</name>
    <dbReference type="NCBI Taxonomy" id="323850"/>
    <lineage>
        <taxon>Bacteria</taxon>
        <taxon>Pseudomonadati</taxon>
        <taxon>Pseudomonadota</taxon>
        <taxon>Gammaproteobacteria</taxon>
        <taxon>Alteromonadales</taxon>
        <taxon>Shewanellaceae</taxon>
        <taxon>Shewanella</taxon>
    </lineage>
</organism>
<gene>
    <name evidence="1" type="primary">rnhA</name>
    <name type="ordered locus">Shew_2112</name>
</gene>
<name>RNH_SHELP</name>
<comment type="function">
    <text evidence="1">Endonuclease that specifically degrades the RNA of RNA-DNA hybrids.</text>
</comment>
<comment type="catalytic activity">
    <reaction evidence="1">
        <text>Endonucleolytic cleavage to 5'-phosphomonoester.</text>
        <dbReference type="EC" id="3.1.26.4"/>
    </reaction>
</comment>
<comment type="cofactor">
    <cofactor evidence="1">
        <name>Mg(2+)</name>
        <dbReference type="ChEBI" id="CHEBI:18420"/>
    </cofactor>
    <text evidence="1">Binds 1 Mg(2+) ion per subunit. May bind a second metal ion at a regulatory site, or after substrate binding.</text>
</comment>
<comment type="subunit">
    <text evidence="1">Monomer.</text>
</comment>
<comment type="subcellular location">
    <subcellularLocation>
        <location evidence="1">Cytoplasm</location>
    </subcellularLocation>
</comment>
<comment type="similarity">
    <text evidence="1">Belongs to the RNase H family.</text>
</comment>
<accession>A3QET0</accession>
<sequence>MHGLKQLLIFTDGSCLGNPGPGGYGVVMKYKAHVKELSGGFALTTNNRMELLAPIMALEALKEPCQIILTSDSQYMRQGITQWIHGWKKRGWLTAAKEPVKNVDLWQRLDAATSTHKIDWRWVKGHAGHIENERCDTLAREAAEAGPSEVDTGYQAKG</sequence>
<dbReference type="EC" id="3.1.26.4" evidence="1"/>
<dbReference type="EMBL" id="CP000606">
    <property type="protein sequence ID" value="ABO23978.1"/>
    <property type="molecule type" value="Genomic_DNA"/>
</dbReference>
<dbReference type="RefSeq" id="WP_011865910.1">
    <property type="nucleotide sequence ID" value="NC_009092.1"/>
</dbReference>
<dbReference type="SMR" id="A3QET0"/>
<dbReference type="STRING" id="323850.Shew_2112"/>
<dbReference type="KEGG" id="slo:Shew_2112"/>
<dbReference type="eggNOG" id="COG0328">
    <property type="taxonomic scope" value="Bacteria"/>
</dbReference>
<dbReference type="HOGENOM" id="CLU_030894_6_0_6"/>
<dbReference type="OrthoDB" id="7845843at2"/>
<dbReference type="Proteomes" id="UP000001558">
    <property type="component" value="Chromosome"/>
</dbReference>
<dbReference type="GO" id="GO:0005737">
    <property type="term" value="C:cytoplasm"/>
    <property type="evidence" value="ECO:0007669"/>
    <property type="project" value="UniProtKB-SubCell"/>
</dbReference>
<dbReference type="GO" id="GO:0000287">
    <property type="term" value="F:magnesium ion binding"/>
    <property type="evidence" value="ECO:0007669"/>
    <property type="project" value="UniProtKB-UniRule"/>
</dbReference>
<dbReference type="GO" id="GO:0003676">
    <property type="term" value="F:nucleic acid binding"/>
    <property type="evidence" value="ECO:0007669"/>
    <property type="project" value="InterPro"/>
</dbReference>
<dbReference type="GO" id="GO:0004523">
    <property type="term" value="F:RNA-DNA hybrid ribonuclease activity"/>
    <property type="evidence" value="ECO:0007669"/>
    <property type="project" value="UniProtKB-UniRule"/>
</dbReference>
<dbReference type="GO" id="GO:0043137">
    <property type="term" value="P:DNA replication, removal of RNA primer"/>
    <property type="evidence" value="ECO:0007669"/>
    <property type="project" value="TreeGrafter"/>
</dbReference>
<dbReference type="CDD" id="cd09278">
    <property type="entry name" value="RNase_HI_prokaryote_like"/>
    <property type="match status" value="1"/>
</dbReference>
<dbReference type="FunFam" id="3.30.420.10:FF:000008">
    <property type="entry name" value="Ribonuclease H"/>
    <property type="match status" value="1"/>
</dbReference>
<dbReference type="Gene3D" id="3.30.420.10">
    <property type="entry name" value="Ribonuclease H-like superfamily/Ribonuclease H"/>
    <property type="match status" value="1"/>
</dbReference>
<dbReference type="HAMAP" id="MF_00042">
    <property type="entry name" value="RNase_H"/>
    <property type="match status" value="1"/>
</dbReference>
<dbReference type="InterPro" id="IPR050092">
    <property type="entry name" value="RNase_H"/>
</dbReference>
<dbReference type="InterPro" id="IPR012337">
    <property type="entry name" value="RNaseH-like_sf"/>
</dbReference>
<dbReference type="InterPro" id="IPR002156">
    <property type="entry name" value="RNaseH_domain"/>
</dbReference>
<dbReference type="InterPro" id="IPR036397">
    <property type="entry name" value="RNaseH_sf"/>
</dbReference>
<dbReference type="InterPro" id="IPR022892">
    <property type="entry name" value="RNaseHI"/>
</dbReference>
<dbReference type="NCBIfam" id="NF001236">
    <property type="entry name" value="PRK00203.1"/>
    <property type="match status" value="1"/>
</dbReference>
<dbReference type="PANTHER" id="PTHR10642">
    <property type="entry name" value="RIBONUCLEASE H1"/>
    <property type="match status" value="1"/>
</dbReference>
<dbReference type="PANTHER" id="PTHR10642:SF26">
    <property type="entry name" value="RIBONUCLEASE H1"/>
    <property type="match status" value="1"/>
</dbReference>
<dbReference type="Pfam" id="PF00075">
    <property type="entry name" value="RNase_H"/>
    <property type="match status" value="1"/>
</dbReference>
<dbReference type="SUPFAM" id="SSF53098">
    <property type="entry name" value="Ribonuclease H-like"/>
    <property type="match status" value="1"/>
</dbReference>
<dbReference type="PROSITE" id="PS50879">
    <property type="entry name" value="RNASE_H_1"/>
    <property type="match status" value="1"/>
</dbReference>
<evidence type="ECO:0000255" key="1">
    <source>
        <dbReference type="HAMAP-Rule" id="MF_00042"/>
    </source>
</evidence>
<evidence type="ECO:0000255" key="2">
    <source>
        <dbReference type="PROSITE-ProRule" id="PRU00408"/>
    </source>
</evidence>